<evidence type="ECO:0000250" key="1"/>
<evidence type="ECO:0000305" key="2"/>
<feature type="chain" id="PRO_0000150322" description="Probable cysteine desulfurase">
    <location>
        <begin position="1"/>
        <end position="404"/>
    </location>
</feature>
<feature type="active site" description="Cysteine persulfide intermediate" evidence="1">
    <location>
        <position position="363"/>
    </location>
</feature>
<feature type="modified residue" description="N6-(pyridoxal phosphate)lysine" evidence="1">
    <location>
        <position position="226"/>
    </location>
</feature>
<reference key="1">
    <citation type="journal article" date="2000" name="Nature">
        <title>DNA sequence of both chromosomes of the cholera pathogen Vibrio cholerae.</title>
        <authorList>
            <person name="Heidelberg J.F."/>
            <person name="Eisen J.A."/>
            <person name="Nelson W.C."/>
            <person name="Clayton R.A."/>
            <person name="Gwinn M.L."/>
            <person name="Dodson R.J."/>
            <person name="Haft D.H."/>
            <person name="Hickey E.K."/>
            <person name="Peterson J.D."/>
            <person name="Umayam L.A."/>
            <person name="Gill S.R."/>
            <person name="Nelson K.E."/>
            <person name="Read T.D."/>
            <person name="Tettelin H."/>
            <person name="Richardson D.L."/>
            <person name="Ermolaeva M.D."/>
            <person name="Vamathevan J.J."/>
            <person name="Bass S."/>
            <person name="Qin H."/>
            <person name="Dragoi I."/>
            <person name="Sellers P."/>
            <person name="McDonald L.A."/>
            <person name="Utterback T.R."/>
            <person name="Fleischmann R.D."/>
            <person name="Nierman W.C."/>
            <person name="White O."/>
            <person name="Salzberg S.L."/>
            <person name="Smith H.O."/>
            <person name="Colwell R.R."/>
            <person name="Mekalanos J.J."/>
            <person name="Venter J.C."/>
            <person name="Fraser C.M."/>
        </authorList>
    </citation>
    <scope>NUCLEOTIDE SEQUENCE [LARGE SCALE GENOMIC DNA]</scope>
    <source>
        <strain>ATCC 39315 / El Tor Inaba N16961</strain>
    </source>
</reference>
<protein>
    <recommendedName>
        <fullName>Probable cysteine desulfurase</fullName>
        <ecNumber>2.8.1.7</ecNumber>
    </recommendedName>
</protein>
<keyword id="KW-0663">Pyridoxal phosphate</keyword>
<keyword id="KW-1185">Reference proteome</keyword>
<keyword id="KW-0808">Transferase</keyword>
<dbReference type="EC" id="2.8.1.7"/>
<dbReference type="EMBL" id="AE003852">
    <property type="protein sequence ID" value="AAF95453.1"/>
    <property type="molecule type" value="Genomic_DNA"/>
</dbReference>
<dbReference type="PIR" id="F82092">
    <property type="entry name" value="F82092"/>
</dbReference>
<dbReference type="RefSeq" id="NP_231940.1">
    <property type="nucleotide sequence ID" value="NC_002505.1"/>
</dbReference>
<dbReference type="SMR" id="Q9KPQ7"/>
<dbReference type="STRING" id="243277.VC_2309"/>
<dbReference type="DNASU" id="2613105"/>
<dbReference type="EnsemblBacteria" id="AAF95453">
    <property type="protein sequence ID" value="AAF95453"/>
    <property type="gene ID" value="VC_2309"/>
</dbReference>
<dbReference type="KEGG" id="vch:VC_2309"/>
<dbReference type="PATRIC" id="fig|243277.26.peg.2201"/>
<dbReference type="eggNOG" id="COG0520">
    <property type="taxonomic scope" value="Bacteria"/>
</dbReference>
<dbReference type="HOGENOM" id="CLU_003433_2_5_6"/>
<dbReference type="Proteomes" id="UP000000584">
    <property type="component" value="Chromosome 1"/>
</dbReference>
<dbReference type="GO" id="GO:0031071">
    <property type="term" value="F:cysteine desulfurase activity"/>
    <property type="evidence" value="ECO:0007669"/>
    <property type="project" value="UniProtKB-EC"/>
</dbReference>
<dbReference type="GO" id="GO:0030170">
    <property type="term" value="F:pyridoxal phosphate binding"/>
    <property type="evidence" value="ECO:0007669"/>
    <property type="project" value="InterPro"/>
</dbReference>
<dbReference type="GO" id="GO:0006534">
    <property type="term" value="P:cysteine metabolic process"/>
    <property type="evidence" value="ECO:0007669"/>
    <property type="project" value="InterPro"/>
</dbReference>
<dbReference type="GO" id="GO:0016226">
    <property type="term" value="P:iron-sulfur cluster assembly"/>
    <property type="evidence" value="ECO:0007669"/>
    <property type="project" value="InterPro"/>
</dbReference>
<dbReference type="CDD" id="cd06453">
    <property type="entry name" value="SufS_like"/>
    <property type="match status" value="1"/>
</dbReference>
<dbReference type="Gene3D" id="3.90.1150.10">
    <property type="entry name" value="Aspartate Aminotransferase, domain 1"/>
    <property type="match status" value="1"/>
</dbReference>
<dbReference type="Gene3D" id="3.40.640.10">
    <property type="entry name" value="Type I PLP-dependent aspartate aminotransferase-like (Major domain)"/>
    <property type="match status" value="1"/>
</dbReference>
<dbReference type="InterPro" id="IPR000192">
    <property type="entry name" value="Aminotrans_V_dom"/>
</dbReference>
<dbReference type="InterPro" id="IPR022471">
    <property type="entry name" value="Cys_desulphurase_CdsA"/>
</dbReference>
<dbReference type="InterPro" id="IPR010970">
    <property type="entry name" value="Cys_dSase_SufS"/>
</dbReference>
<dbReference type="InterPro" id="IPR016454">
    <property type="entry name" value="Cysteine_dSase"/>
</dbReference>
<dbReference type="InterPro" id="IPR015424">
    <property type="entry name" value="PyrdxlP-dep_Trfase"/>
</dbReference>
<dbReference type="InterPro" id="IPR015421">
    <property type="entry name" value="PyrdxlP-dep_Trfase_major"/>
</dbReference>
<dbReference type="InterPro" id="IPR015422">
    <property type="entry name" value="PyrdxlP-dep_Trfase_small"/>
</dbReference>
<dbReference type="NCBIfam" id="TIGR03392">
    <property type="entry name" value="FeS_syn_CsdA"/>
    <property type="match status" value="1"/>
</dbReference>
<dbReference type="NCBIfam" id="TIGR01979">
    <property type="entry name" value="sufS"/>
    <property type="match status" value="1"/>
</dbReference>
<dbReference type="PANTHER" id="PTHR43586">
    <property type="entry name" value="CYSTEINE DESULFURASE"/>
    <property type="match status" value="1"/>
</dbReference>
<dbReference type="PANTHER" id="PTHR43586:SF8">
    <property type="entry name" value="CYSTEINE DESULFURASE 1, CHLOROPLASTIC"/>
    <property type="match status" value="1"/>
</dbReference>
<dbReference type="Pfam" id="PF00266">
    <property type="entry name" value="Aminotran_5"/>
    <property type="match status" value="1"/>
</dbReference>
<dbReference type="PIRSF" id="PIRSF005572">
    <property type="entry name" value="NifS"/>
    <property type="match status" value="1"/>
</dbReference>
<dbReference type="SUPFAM" id="SSF53383">
    <property type="entry name" value="PLP-dependent transferases"/>
    <property type="match status" value="1"/>
</dbReference>
<name>CSD_VIBCH</name>
<organism>
    <name type="scientific">Vibrio cholerae serotype O1 (strain ATCC 39315 / El Tor Inaba N16961)</name>
    <dbReference type="NCBI Taxonomy" id="243277"/>
    <lineage>
        <taxon>Bacteria</taxon>
        <taxon>Pseudomonadati</taxon>
        <taxon>Pseudomonadota</taxon>
        <taxon>Gammaproteobacteria</taxon>
        <taxon>Vibrionales</taxon>
        <taxon>Vibrionaceae</taxon>
        <taxon>Vibrio</taxon>
    </lineage>
</organism>
<proteinExistence type="inferred from homology"/>
<gene>
    <name type="primary">csd</name>
    <name type="ordered locus">VC_2309</name>
</gene>
<sequence length="404" mass="43438">MMLNLDAIRAQFPALQQIVNGNPLVYLDSAATTQKPQCVIDAISHYYSQHNANVHRGSHSLTAQATSQFEGAREQVAQFIGAPSSKNIIWTRGATEALNLIAQSYARSTLQAGDEILVSETEHHANIVPWQMVAEQTGAKVVKIPMTTTGEFGLAAFRQLLSPRCKIVALAHITNVTGTRQPIEAVIQAAHQQGAIVVIDGAQGIVHETVDVRALDADFYVFSGHKLYAPAGIGVLYGKTALLEAMPPWHGGGKMVEKVSFDGTTFTGLPGKFEAGTPNVAGAIALATAIDWYQSLDRAAVEAHLHQLQQQAYQAISQIDDIRVLGYQPNASVLSLVMDGVHHQDLATLLDQQGIAVRAGHHCAHPLMDAFGVKGTVRISFGVYNSAEEVERLIAAIHKAVDLL</sequence>
<accession>Q9KPQ7</accession>
<comment type="function">
    <text evidence="1">Catalyzes the removal of elemental sulfur and selenium atoms from L-cysteine, L-cystine, L-selenocysteine, and L-selenocystine to produce L-alanine.</text>
</comment>
<comment type="catalytic activity">
    <reaction>
        <text>(sulfur carrier)-H + L-cysteine = (sulfur carrier)-SH + L-alanine</text>
        <dbReference type="Rhea" id="RHEA:43892"/>
        <dbReference type="Rhea" id="RHEA-COMP:14737"/>
        <dbReference type="Rhea" id="RHEA-COMP:14739"/>
        <dbReference type="ChEBI" id="CHEBI:29917"/>
        <dbReference type="ChEBI" id="CHEBI:35235"/>
        <dbReference type="ChEBI" id="CHEBI:57972"/>
        <dbReference type="ChEBI" id="CHEBI:64428"/>
        <dbReference type="EC" id="2.8.1.7"/>
    </reaction>
</comment>
<comment type="cofactor">
    <cofactor evidence="1">
        <name>pyridoxal 5'-phosphate</name>
        <dbReference type="ChEBI" id="CHEBI:597326"/>
    </cofactor>
</comment>
<comment type="similarity">
    <text evidence="2">Belongs to the class-V pyridoxal-phosphate-dependent aminotransferase family. Csd subfamily.</text>
</comment>